<sequence length="654" mass="76175">MTQITEKELKKKYLDLLSQNFDTPEKLATEIINLESILELPKGTEHFVSDLHGEYEAFQHVLRNGSGNVRAKINDIFKERLSTKELNDLTALVYYPEDKLKLIKSDFQNCGQLNVWYITTIEHLIELIKYCSSKYTRSKLRKALPKQYVYIIEELLYKSNEYQNKKSYYETLVNQVIELKQADDLIIGLAYSVQRLVVDHLHVVGDIYDRGPQPDKIMDTLINYHSLDIQWGNHDVLWVGAYAGSKVCLANLLRICARYDNLDIIEDAYGINLRPLLTLAEKYYDADNPAFKPKKRPDKHERLTQREESQITKIHQAIAMIQFKLEIPIIKRRPNFEMEERLVLEKVNYDTNEITVYGNTYPLKDTCFQTVNRDNPAELLPEEEEVMNKLLLSFQQSEKLRRHMSFLMRKGSLYLPYNGNLLIHGCIPVDENGEMESFEIDGHTYSGQELLDVFEYHVRKSFDEKENTDDLSTDLVWYLWTGKYSSLFGKRAMTTFERYFIADKASHKEEKNPYYHLREDVNMVRKMLSDFGLNPDEGRIINGHTPVKEINGEDPIKADGKMLVIDGGFSKAYQSTTGIAGYTLLYNSFGMQLVAHQQFNAKEKILSEGIDELSIKRVVDKELQRKKIRDTNIGKDLQAQIDILKMLMHDRYLD</sequence>
<evidence type="ECO:0000255" key="1">
    <source>
        <dbReference type="HAMAP-Rule" id="MF_01854"/>
    </source>
</evidence>
<evidence type="ECO:0000256" key="2">
    <source>
        <dbReference type="SAM" id="MobiDB-lite"/>
    </source>
</evidence>
<accession>Q5HD37</accession>
<protein>
    <recommendedName>
        <fullName evidence="1">Fructose-1,6-bisphosphatase class 3</fullName>
        <shortName evidence="1">FBPase class 3</shortName>
        <ecNumber evidence="1">3.1.3.11</ecNumber>
    </recommendedName>
    <alternativeName>
        <fullName evidence="1">D-fructose-1,6-bisphosphate 1-phosphohydrolase class 3</fullName>
    </alternativeName>
</protein>
<organism>
    <name type="scientific">Staphylococcus aureus (strain COL)</name>
    <dbReference type="NCBI Taxonomy" id="93062"/>
    <lineage>
        <taxon>Bacteria</taxon>
        <taxon>Bacillati</taxon>
        <taxon>Bacillota</taxon>
        <taxon>Bacilli</taxon>
        <taxon>Bacillales</taxon>
        <taxon>Staphylococcaceae</taxon>
        <taxon>Staphylococcus</taxon>
    </lineage>
</organism>
<gene>
    <name evidence="1" type="primary">fbp</name>
    <name type="ordered locus">SACOL2527</name>
</gene>
<name>F16PC_STAAC</name>
<keyword id="KW-0119">Carbohydrate metabolism</keyword>
<keyword id="KW-0378">Hydrolase</keyword>
<keyword id="KW-0464">Manganese</keyword>
<comment type="catalytic activity">
    <reaction evidence="1">
        <text>beta-D-fructose 1,6-bisphosphate + H2O = beta-D-fructose 6-phosphate + phosphate</text>
        <dbReference type="Rhea" id="RHEA:11064"/>
        <dbReference type="ChEBI" id="CHEBI:15377"/>
        <dbReference type="ChEBI" id="CHEBI:32966"/>
        <dbReference type="ChEBI" id="CHEBI:43474"/>
        <dbReference type="ChEBI" id="CHEBI:57634"/>
        <dbReference type="EC" id="3.1.3.11"/>
    </reaction>
</comment>
<comment type="cofactor">
    <cofactor evidence="1">
        <name>Mn(2+)</name>
        <dbReference type="ChEBI" id="CHEBI:29035"/>
    </cofactor>
</comment>
<comment type="pathway">
    <text evidence="1">Carbohydrate biosynthesis; gluconeogenesis.</text>
</comment>
<comment type="similarity">
    <text evidence="1">Belongs to the FBPase class 3 family.</text>
</comment>
<reference key="1">
    <citation type="journal article" date="2005" name="J. Bacteriol.">
        <title>Insights on evolution of virulence and resistance from the complete genome analysis of an early methicillin-resistant Staphylococcus aureus strain and a biofilm-producing methicillin-resistant Staphylococcus epidermidis strain.</title>
        <authorList>
            <person name="Gill S.R."/>
            <person name="Fouts D.E."/>
            <person name="Archer G.L."/>
            <person name="Mongodin E.F."/>
            <person name="DeBoy R.T."/>
            <person name="Ravel J."/>
            <person name="Paulsen I.T."/>
            <person name="Kolonay J.F."/>
            <person name="Brinkac L.M."/>
            <person name="Beanan M.J."/>
            <person name="Dodson R.J."/>
            <person name="Daugherty S.C."/>
            <person name="Madupu R."/>
            <person name="Angiuoli S.V."/>
            <person name="Durkin A.S."/>
            <person name="Haft D.H."/>
            <person name="Vamathevan J.J."/>
            <person name="Khouri H."/>
            <person name="Utterback T.R."/>
            <person name="Lee C."/>
            <person name="Dimitrov G."/>
            <person name="Jiang L."/>
            <person name="Qin H."/>
            <person name="Weidman J."/>
            <person name="Tran K."/>
            <person name="Kang K.H."/>
            <person name="Hance I.R."/>
            <person name="Nelson K.E."/>
            <person name="Fraser C.M."/>
        </authorList>
    </citation>
    <scope>NUCLEOTIDE SEQUENCE [LARGE SCALE GENOMIC DNA]</scope>
    <source>
        <strain>COL</strain>
    </source>
</reference>
<proteinExistence type="inferred from homology"/>
<feature type="chain" id="PRO_0000359983" description="Fructose-1,6-bisphosphatase class 3">
    <location>
        <begin position="1"/>
        <end position="654"/>
    </location>
</feature>
<feature type="region of interest" description="Disordered" evidence="2">
    <location>
        <begin position="288"/>
        <end position="307"/>
    </location>
</feature>
<feature type="compositionally biased region" description="Basic and acidic residues" evidence="2">
    <location>
        <begin position="298"/>
        <end position="307"/>
    </location>
</feature>
<dbReference type="EC" id="3.1.3.11" evidence="1"/>
<dbReference type="EMBL" id="CP000046">
    <property type="protein sequence ID" value="AAW37304.1"/>
    <property type="molecule type" value="Genomic_DNA"/>
</dbReference>
<dbReference type="RefSeq" id="WP_000192168.1">
    <property type="nucleotide sequence ID" value="NZ_JBGOFO010000001.1"/>
</dbReference>
<dbReference type="KEGG" id="sac:SACOL2527"/>
<dbReference type="HOGENOM" id="CLU_028392_2_0_9"/>
<dbReference type="UniPathway" id="UPA00138"/>
<dbReference type="Proteomes" id="UP000000530">
    <property type="component" value="Chromosome"/>
</dbReference>
<dbReference type="GO" id="GO:0042132">
    <property type="term" value="F:fructose 1,6-bisphosphate 1-phosphatase activity"/>
    <property type="evidence" value="ECO:0007669"/>
    <property type="project" value="UniProtKB-UniRule"/>
</dbReference>
<dbReference type="GO" id="GO:0006094">
    <property type="term" value="P:gluconeogenesis"/>
    <property type="evidence" value="ECO:0007669"/>
    <property type="project" value="UniProtKB-UniRule"/>
</dbReference>
<dbReference type="Gene3D" id="3.60.21.10">
    <property type="match status" value="1"/>
</dbReference>
<dbReference type="HAMAP" id="MF_01854">
    <property type="entry name" value="FBPase_class3"/>
    <property type="match status" value="1"/>
</dbReference>
<dbReference type="InterPro" id="IPR009164">
    <property type="entry name" value="FBPtase_class3"/>
</dbReference>
<dbReference type="InterPro" id="IPR029052">
    <property type="entry name" value="Metallo-depent_PP-like"/>
</dbReference>
<dbReference type="Pfam" id="PF06874">
    <property type="entry name" value="FBPase_2"/>
    <property type="match status" value="1"/>
</dbReference>
<dbReference type="PIRSF" id="PIRSF000906">
    <property type="entry name" value="FBPtase_Bacill"/>
    <property type="match status" value="1"/>
</dbReference>
<dbReference type="SUPFAM" id="SSF56300">
    <property type="entry name" value="Metallo-dependent phosphatases"/>
    <property type="match status" value="2"/>
</dbReference>